<proteinExistence type="evidence at protein level"/>
<organism>
    <name type="scientific">Leucaena leucocephala</name>
    <name type="common">White popinac</name>
    <name type="synonym">Leucaena glauca</name>
    <dbReference type="NCBI Taxonomy" id="3866"/>
    <lineage>
        <taxon>Eukaryota</taxon>
        <taxon>Viridiplantae</taxon>
        <taxon>Streptophyta</taxon>
        <taxon>Embryophyta</taxon>
        <taxon>Tracheophyta</taxon>
        <taxon>Spermatophyta</taxon>
        <taxon>Magnoliopsida</taxon>
        <taxon>eudicotyledons</taxon>
        <taxon>Gunneridae</taxon>
        <taxon>Pentapetalae</taxon>
        <taxon>rosids</taxon>
        <taxon>fabids</taxon>
        <taxon>Fabales</taxon>
        <taxon>Fabaceae</taxon>
        <taxon>Caesalpinioideae</taxon>
        <taxon>mimosoid clade</taxon>
        <taxon>Mimoseae</taxon>
        <taxon>Leucaena</taxon>
    </lineage>
</organism>
<accession>P00225</accession>
<dbReference type="PIR" id="A92055">
    <property type="entry name" value="FELG"/>
</dbReference>
<dbReference type="SMR" id="P00225"/>
<dbReference type="GO" id="GO:0009570">
    <property type="term" value="C:chloroplast stroma"/>
    <property type="evidence" value="ECO:0007669"/>
    <property type="project" value="TreeGrafter"/>
</dbReference>
<dbReference type="GO" id="GO:0051537">
    <property type="term" value="F:2 iron, 2 sulfur cluster binding"/>
    <property type="evidence" value="ECO:0007669"/>
    <property type="project" value="UniProtKB-KW"/>
</dbReference>
<dbReference type="GO" id="GO:0009055">
    <property type="term" value="F:electron transfer activity"/>
    <property type="evidence" value="ECO:0007669"/>
    <property type="project" value="InterPro"/>
</dbReference>
<dbReference type="GO" id="GO:0046872">
    <property type="term" value="F:metal ion binding"/>
    <property type="evidence" value="ECO:0007669"/>
    <property type="project" value="UniProtKB-KW"/>
</dbReference>
<dbReference type="GO" id="GO:0022900">
    <property type="term" value="P:electron transport chain"/>
    <property type="evidence" value="ECO:0007669"/>
    <property type="project" value="InterPro"/>
</dbReference>
<dbReference type="CDD" id="cd00207">
    <property type="entry name" value="fer2"/>
    <property type="match status" value="1"/>
</dbReference>
<dbReference type="FunFam" id="3.10.20.30:FF:000014">
    <property type="entry name" value="Ferredoxin"/>
    <property type="match status" value="1"/>
</dbReference>
<dbReference type="Gene3D" id="3.10.20.30">
    <property type="match status" value="1"/>
</dbReference>
<dbReference type="InterPro" id="IPR036010">
    <property type="entry name" value="2Fe-2S_ferredoxin-like_sf"/>
</dbReference>
<dbReference type="InterPro" id="IPR001041">
    <property type="entry name" value="2Fe-2S_ferredoxin-type"/>
</dbReference>
<dbReference type="InterPro" id="IPR006058">
    <property type="entry name" value="2Fe2S_fd_BS"/>
</dbReference>
<dbReference type="InterPro" id="IPR012675">
    <property type="entry name" value="Beta-grasp_dom_sf"/>
</dbReference>
<dbReference type="InterPro" id="IPR010241">
    <property type="entry name" value="Fd_pln"/>
</dbReference>
<dbReference type="NCBIfam" id="TIGR02008">
    <property type="entry name" value="fdx_plant"/>
    <property type="match status" value="1"/>
</dbReference>
<dbReference type="PANTHER" id="PTHR43112">
    <property type="entry name" value="FERREDOXIN"/>
    <property type="match status" value="1"/>
</dbReference>
<dbReference type="PANTHER" id="PTHR43112:SF3">
    <property type="entry name" value="FERREDOXIN-2, CHLOROPLASTIC"/>
    <property type="match status" value="1"/>
</dbReference>
<dbReference type="Pfam" id="PF00111">
    <property type="entry name" value="Fer2"/>
    <property type="match status" value="1"/>
</dbReference>
<dbReference type="SUPFAM" id="SSF54292">
    <property type="entry name" value="2Fe-2S ferredoxin-like"/>
    <property type="match status" value="1"/>
</dbReference>
<dbReference type="PROSITE" id="PS00197">
    <property type="entry name" value="2FE2S_FER_1"/>
    <property type="match status" value="1"/>
</dbReference>
<dbReference type="PROSITE" id="PS51085">
    <property type="entry name" value="2FE2S_FER_2"/>
    <property type="match status" value="1"/>
</dbReference>
<comment type="function">
    <text>Ferredoxins are iron-sulfur proteins that transfer electrons in a wide variety of metabolic reactions.</text>
</comment>
<comment type="cofactor">
    <cofactor>
        <name>[2Fe-2S] cluster</name>
        <dbReference type="ChEBI" id="CHEBI:190135"/>
    </cofactor>
    <text>Binds 1 [2Fe-2S] cluster.</text>
</comment>
<comment type="subcellular location">
    <subcellularLocation>
        <location>Plastid</location>
        <location>Chloroplast</location>
    </subcellularLocation>
</comment>
<comment type="similarity">
    <text evidence="2">Belongs to the 2Fe2S plant-type ferredoxin family.</text>
</comment>
<protein>
    <recommendedName>
        <fullName>Ferredoxin</fullName>
    </recommendedName>
</protein>
<feature type="chain" id="PRO_0000189337" description="Ferredoxin">
    <location>
        <begin position="1"/>
        <end position="96"/>
    </location>
</feature>
<feature type="domain" description="2Fe-2S ferredoxin-type" evidence="1">
    <location>
        <begin position="2"/>
        <end position="92"/>
    </location>
</feature>
<feature type="binding site" evidence="1">
    <location>
        <position position="38"/>
    </location>
    <ligand>
        <name>[2Fe-2S] cluster</name>
        <dbReference type="ChEBI" id="CHEBI:190135"/>
    </ligand>
</feature>
<feature type="binding site" evidence="1">
    <location>
        <position position="43"/>
    </location>
    <ligand>
        <name>[2Fe-2S] cluster</name>
        <dbReference type="ChEBI" id="CHEBI:190135"/>
    </ligand>
</feature>
<feature type="binding site" evidence="1">
    <location>
        <position position="46"/>
    </location>
    <ligand>
        <name>[2Fe-2S] cluster</name>
        <dbReference type="ChEBI" id="CHEBI:190135"/>
    </ligand>
</feature>
<feature type="binding site" evidence="1">
    <location>
        <position position="76"/>
    </location>
    <ligand>
        <name>[2Fe-2S] cluster</name>
        <dbReference type="ChEBI" id="CHEBI:190135"/>
    </ligand>
</feature>
<feature type="sequence variant" description="In 50% of the molecules.">
    <original>L</original>
    <variation>V</variation>
    <location>
        <position position="6"/>
    </location>
</feature>
<feature type="sequence variant" description="In 50% of the molecules.">
    <original>P</original>
    <variation>A</variation>
    <location>
        <position position="12"/>
    </location>
</feature>
<feature type="sequence variant">
    <original>E</original>
    <variation>D</variation>
    <location>
        <position position="33"/>
    </location>
</feature>
<feature type="sequence variant" description="In 33% of the molecules.">
    <original>G</original>
    <variation>A</variation>
    <location>
        <position position="96"/>
    </location>
</feature>
<sequence>AFKVKLLTPDGPKEFECPDDVYILDQAEELGIELPYSCRAGSCSSCAGKLVEGDLDQSDQSFLDDEQIEEGWVLTCAAYPRSDVVIETHKEEELTG</sequence>
<evidence type="ECO:0000255" key="1">
    <source>
        <dbReference type="PROSITE-ProRule" id="PRU00465"/>
    </source>
</evidence>
<evidence type="ECO:0000305" key="2"/>
<reference key="1">
    <citation type="journal article" date="1969" name="J. Biol. Chem.">
        <title>Non-heme iron proteins. X. The amino acid sequences of ferredoxins from Leucaena glauca.</title>
        <authorList>
            <person name="Benson A.M."/>
            <person name="Yasunobu K.T."/>
        </authorList>
    </citation>
    <scope>PROTEIN SEQUENCE</scope>
</reference>
<reference key="2">
    <citation type="journal article" date="1969" name="Proc. Natl. Acad. Sci. U.S.A.">
        <title>Nonheme iron proteins, XI. Some genetic aspects.</title>
        <authorList>
            <person name="Benson A.M."/>
            <person name="Yasunobu K.T."/>
        </authorList>
    </citation>
    <scope>PROTEIN SEQUENCE</scope>
</reference>
<name>FER_LEULE</name>
<keyword id="KW-0001">2Fe-2S</keyword>
<keyword id="KW-0150">Chloroplast</keyword>
<keyword id="KW-0903">Direct protein sequencing</keyword>
<keyword id="KW-0249">Electron transport</keyword>
<keyword id="KW-0408">Iron</keyword>
<keyword id="KW-0411">Iron-sulfur</keyword>
<keyword id="KW-0479">Metal-binding</keyword>
<keyword id="KW-0934">Plastid</keyword>
<keyword id="KW-0813">Transport</keyword>